<sequence length="1831" mass="208599">MAEFLDSEAEESEEEEELDVNERKRLKKLKAAVSDSSEEEEDDEERLREELKDLIDDNPIEEDDGSGYDSDGVGSGKKRKKHEDDDLDDRLEDDDYDLIEENLGVKVERRKRFKRLRRIHDNESDGEEQHVDEGLVREQIAEQLFDENDESIGHRSERSHREADDYDDVDTESDADDFIVDDNGRPIAEKKKKRRPIFTDASLQEGQDIFGVDFDYDDFSKYEEDDYEDDSEGDEYDEDLGVGDDTRVKKKKALKKKVVKKTIFDIYEPSELKRGHFTDMDNEIRKTDIPERMQLREVPVTPVPEGSDELDLEAEWIYKYAFCKHTVSEQEKPESREKMRKPPTTVNKIKQTLEFIRNQQLEVPFIAFYRKEYVKPELNIDDLWKVYYYDGIWCQLNERKRKLKVLFEKMRQFQLDTLCADTDQPVPDDVRLILDSDFERLADVQSMEELKDVHMYFLLNYSHELPRMQAEQRRKAIQERREAKARRQAAAAENGDDAAEAIVVPEPEDDDDPELIDYQLKQASNSSPYAVFRKAGICGFAKHFGLTPEQYAENLRDNYQRNEITQESIGPTELAKQYLSPRFMTTDEVIHAAKYVVARQLAQEPLLRKTMREVYFDRARINIRPTKNGMVLIDENSPVYSMKYVAKKPVSDLFGDQFIKLMMAEEEKLLEITFLEEFEGNACANGTPGDYVEESKALYQLDQFAKHVQEWNKLRAECVQLALQKWVIPDLIKELRSTLHEEAQQFVLRSCTGKLYKWLKVAPYKPQLPPDFGYEEWSTLRGIRVLGLAYDPDHSVAAFCAVTTVEGDISDYLRLPNILKRKNSYNLEEKAQKLADLRKLSDFIKMKKPHIVVIGAESRDAQNIQADIKEILHELETSEQFPPIEVEIIDNELAKIYANSKKGESDFKEYPPLLKQAASLARKMQDPLVEYSQLCDADDEILCLRYHPLQERVPREQLLEQLSLQFINRTSEVGLDINLMVQNSRTINLLQYICGLGPRKGQALLKLLKQSNQRLENRTQLVTVCHLGPRVFINCSGFIKIDTSSLGDSTEAYVEVLDGSRVHPETYEWARKMAIDAMEYDDEETNPAGALEEILESPERLKDLDLDAFAVELERQGFGSKSITLYDIRNELSCLYKDYRTPYTKPSAEELFDMLTKETPDSFYVGKCVTAMVTGFTYRRPQGDQLDSANPVRLDSNESWQCPFCHKDDFPELSEVWNHFDANACPGQPSGVRVRLENGLPGFIHIKNLSDRQVRNPEERVRVSQMIHVRIIKIDIDRFSVECSSRTADLKDVNNEWRPRRDNYYDYVTEEQDNRKVSDAKARALKRKIYARRVIAHPSFFNKSYAEVVAMLAEADQGEVALRPSSKSKDHLTATWKVADDIFQHIDVREEGKENDFSLGRSLWIGTEEFEDLDEIIARHIMPMALAARELIQYKYYKPNMVTGDENERDVMEKLLREEKANDPKKIHYFFTASRAMPGKFLLSYLPKTKVRHEYVTVMPEGYRFRGQIFDTVNSLLRWFKEHWLDPTATPASASASNLTPLHLMRPPPTISSSSQTSLGPQAPYSVTGSVTGGTPRSGISSAVGGGGSSAYSITQSITGYGTSGSSAPGAGVSSSHYGSSSTPSFGAINTPYTPSGQTPFMTPYTPHASQTPRYGHNVPSPSSQSSSSQRHHYGSSSGTGSTPRYHDMGGGGGGGVGGGGGSNAYSMQPHHQQRAKENLDWQLANDAWARRRPQQHQSHQSYHAQQQHHHSQQQPHMGMSMNMGITMSLGRGTGGGGGGGYGSTPVNDYSTGGGHNRGMSSKASVRSTPRTNASPHSMNLGDATPLYDEN</sequence>
<organism>
    <name type="scientific">Drosophila melanogaster</name>
    <name type="common">Fruit fly</name>
    <dbReference type="NCBI Taxonomy" id="7227"/>
    <lineage>
        <taxon>Eukaryota</taxon>
        <taxon>Metazoa</taxon>
        <taxon>Ecdysozoa</taxon>
        <taxon>Arthropoda</taxon>
        <taxon>Hexapoda</taxon>
        <taxon>Insecta</taxon>
        <taxon>Pterygota</taxon>
        <taxon>Neoptera</taxon>
        <taxon>Endopterygota</taxon>
        <taxon>Diptera</taxon>
        <taxon>Brachycera</taxon>
        <taxon>Muscomorpha</taxon>
        <taxon>Ephydroidea</taxon>
        <taxon>Drosophilidae</taxon>
        <taxon>Drosophila</taxon>
        <taxon>Sophophora</taxon>
    </lineage>
</organism>
<protein>
    <recommendedName>
        <fullName>Transcription elongation factor SPT6</fullName>
    </recommendedName>
</protein>
<name>SPT6H_DROME</name>
<keyword id="KW-0143">Chaperone</keyword>
<keyword id="KW-0175">Coiled coil</keyword>
<keyword id="KW-0539">Nucleus</keyword>
<keyword id="KW-0597">Phosphoprotein</keyword>
<keyword id="KW-1185">Reference proteome</keyword>
<keyword id="KW-0804">Transcription</keyword>
<gene>
    <name type="primary">Spt6</name>
    <name type="ORF">CG12225</name>
</gene>
<proteinExistence type="evidence at protein level"/>
<reference key="1">
    <citation type="submission" date="1998-11" db="EMBL/GenBank/DDBJ databases">
        <title>Characterization of Drosophila SPT6 homolog.</title>
        <authorList>
            <person name="Chiang P.-W."/>
        </authorList>
    </citation>
    <scope>NUCLEOTIDE SEQUENCE [GENOMIC DNA / MRNA]</scope>
</reference>
<reference key="2">
    <citation type="journal article" date="2000" name="Science">
        <title>The genome sequence of Drosophila melanogaster.</title>
        <authorList>
            <person name="Adams M.D."/>
            <person name="Celniker S.E."/>
            <person name="Holt R.A."/>
            <person name="Evans C.A."/>
            <person name="Gocayne J.D."/>
            <person name="Amanatides P.G."/>
            <person name="Scherer S.E."/>
            <person name="Li P.W."/>
            <person name="Hoskins R.A."/>
            <person name="Galle R.F."/>
            <person name="George R.A."/>
            <person name="Lewis S.E."/>
            <person name="Richards S."/>
            <person name="Ashburner M."/>
            <person name="Henderson S.N."/>
            <person name="Sutton G.G."/>
            <person name="Wortman J.R."/>
            <person name="Yandell M.D."/>
            <person name="Zhang Q."/>
            <person name="Chen L.X."/>
            <person name="Brandon R.C."/>
            <person name="Rogers Y.-H.C."/>
            <person name="Blazej R.G."/>
            <person name="Champe M."/>
            <person name="Pfeiffer B.D."/>
            <person name="Wan K.H."/>
            <person name="Doyle C."/>
            <person name="Baxter E.G."/>
            <person name="Helt G."/>
            <person name="Nelson C.R."/>
            <person name="Miklos G.L.G."/>
            <person name="Abril J.F."/>
            <person name="Agbayani A."/>
            <person name="An H.-J."/>
            <person name="Andrews-Pfannkoch C."/>
            <person name="Baldwin D."/>
            <person name="Ballew R.M."/>
            <person name="Basu A."/>
            <person name="Baxendale J."/>
            <person name="Bayraktaroglu L."/>
            <person name="Beasley E.M."/>
            <person name="Beeson K.Y."/>
            <person name="Benos P.V."/>
            <person name="Berman B.P."/>
            <person name="Bhandari D."/>
            <person name="Bolshakov S."/>
            <person name="Borkova D."/>
            <person name="Botchan M.R."/>
            <person name="Bouck J."/>
            <person name="Brokstein P."/>
            <person name="Brottier P."/>
            <person name="Burtis K.C."/>
            <person name="Busam D.A."/>
            <person name="Butler H."/>
            <person name="Cadieu E."/>
            <person name="Center A."/>
            <person name="Chandra I."/>
            <person name="Cherry J.M."/>
            <person name="Cawley S."/>
            <person name="Dahlke C."/>
            <person name="Davenport L.B."/>
            <person name="Davies P."/>
            <person name="de Pablos B."/>
            <person name="Delcher A."/>
            <person name="Deng Z."/>
            <person name="Mays A.D."/>
            <person name="Dew I."/>
            <person name="Dietz S.M."/>
            <person name="Dodson K."/>
            <person name="Doup L.E."/>
            <person name="Downes M."/>
            <person name="Dugan-Rocha S."/>
            <person name="Dunkov B.C."/>
            <person name="Dunn P."/>
            <person name="Durbin K.J."/>
            <person name="Evangelista C.C."/>
            <person name="Ferraz C."/>
            <person name="Ferriera S."/>
            <person name="Fleischmann W."/>
            <person name="Fosler C."/>
            <person name="Gabrielian A.E."/>
            <person name="Garg N.S."/>
            <person name="Gelbart W.M."/>
            <person name="Glasser K."/>
            <person name="Glodek A."/>
            <person name="Gong F."/>
            <person name="Gorrell J.H."/>
            <person name="Gu Z."/>
            <person name="Guan P."/>
            <person name="Harris M."/>
            <person name="Harris N.L."/>
            <person name="Harvey D.A."/>
            <person name="Heiman T.J."/>
            <person name="Hernandez J.R."/>
            <person name="Houck J."/>
            <person name="Hostin D."/>
            <person name="Houston K.A."/>
            <person name="Howland T.J."/>
            <person name="Wei M.-H."/>
            <person name="Ibegwam C."/>
            <person name="Jalali M."/>
            <person name="Kalush F."/>
            <person name="Karpen G.H."/>
            <person name="Ke Z."/>
            <person name="Kennison J.A."/>
            <person name="Ketchum K.A."/>
            <person name="Kimmel B.E."/>
            <person name="Kodira C.D."/>
            <person name="Kraft C.L."/>
            <person name="Kravitz S."/>
            <person name="Kulp D."/>
            <person name="Lai Z."/>
            <person name="Lasko P."/>
            <person name="Lei Y."/>
            <person name="Levitsky A.A."/>
            <person name="Li J.H."/>
            <person name="Li Z."/>
            <person name="Liang Y."/>
            <person name="Lin X."/>
            <person name="Liu X."/>
            <person name="Mattei B."/>
            <person name="McIntosh T.C."/>
            <person name="McLeod M.P."/>
            <person name="McPherson D."/>
            <person name="Merkulov G."/>
            <person name="Milshina N.V."/>
            <person name="Mobarry C."/>
            <person name="Morris J."/>
            <person name="Moshrefi A."/>
            <person name="Mount S.M."/>
            <person name="Moy M."/>
            <person name="Murphy B."/>
            <person name="Murphy L."/>
            <person name="Muzny D.M."/>
            <person name="Nelson D.L."/>
            <person name="Nelson D.R."/>
            <person name="Nelson K.A."/>
            <person name="Nixon K."/>
            <person name="Nusskern D.R."/>
            <person name="Pacleb J.M."/>
            <person name="Palazzolo M."/>
            <person name="Pittman G.S."/>
            <person name="Pan S."/>
            <person name="Pollard J."/>
            <person name="Puri V."/>
            <person name="Reese M.G."/>
            <person name="Reinert K."/>
            <person name="Remington K."/>
            <person name="Saunders R.D.C."/>
            <person name="Scheeler F."/>
            <person name="Shen H."/>
            <person name="Shue B.C."/>
            <person name="Siden-Kiamos I."/>
            <person name="Simpson M."/>
            <person name="Skupski M.P."/>
            <person name="Smith T.J."/>
            <person name="Spier E."/>
            <person name="Spradling A.C."/>
            <person name="Stapleton M."/>
            <person name="Strong R."/>
            <person name="Sun E."/>
            <person name="Svirskas R."/>
            <person name="Tector C."/>
            <person name="Turner R."/>
            <person name="Venter E."/>
            <person name="Wang A.H."/>
            <person name="Wang X."/>
            <person name="Wang Z.-Y."/>
            <person name="Wassarman D.A."/>
            <person name="Weinstock G.M."/>
            <person name="Weissenbach J."/>
            <person name="Williams S.M."/>
            <person name="Woodage T."/>
            <person name="Worley K.C."/>
            <person name="Wu D."/>
            <person name="Yang S."/>
            <person name="Yao Q.A."/>
            <person name="Ye J."/>
            <person name="Yeh R.-F."/>
            <person name="Zaveri J.S."/>
            <person name="Zhan M."/>
            <person name="Zhang G."/>
            <person name="Zhao Q."/>
            <person name="Zheng L."/>
            <person name="Zheng X.H."/>
            <person name="Zhong F.N."/>
            <person name="Zhong W."/>
            <person name="Zhou X."/>
            <person name="Zhu S.C."/>
            <person name="Zhu X."/>
            <person name="Smith H.O."/>
            <person name="Gibbs R.A."/>
            <person name="Myers E.W."/>
            <person name="Rubin G.M."/>
            <person name="Venter J.C."/>
        </authorList>
    </citation>
    <scope>NUCLEOTIDE SEQUENCE [LARGE SCALE GENOMIC DNA]</scope>
    <source>
        <strain>Berkeley</strain>
    </source>
</reference>
<reference key="3">
    <citation type="journal article" date="2002" name="Genome Biol.">
        <title>Annotation of the Drosophila melanogaster euchromatic genome: a systematic review.</title>
        <authorList>
            <person name="Misra S."/>
            <person name="Crosby M.A."/>
            <person name="Mungall C.J."/>
            <person name="Matthews B.B."/>
            <person name="Campbell K.S."/>
            <person name="Hradecky P."/>
            <person name="Huang Y."/>
            <person name="Kaminker J.S."/>
            <person name="Millburn G.H."/>
            <person name="Prochnik S.E."/>
            <person name="Smith C.D."/>
            <person name="Tupy J.L."/>
            <person name="Whitfield E.J."/>
            <person name="Bayraktaroglu L."/>
            <person name="Berman B.P."/>
            <person name="Bettencourt B.R."/>
            <person name="Celniker S.E."/>
            <person name="de Grey A.D.N.J."/>
            <person name="Drysdale R.A."/>
            <person name="Harris N.L."/>
            <person name="Richter J."/>
            <person name="Russo S."/>
            <person name="Schroeder A.J."/>
            <person name="Shu S.Q."/>
            <person name="Stapleton M."/>
            <person name="Yamada C."/>
            <person name="Ashburner M."/>
            <person name="Gelbart W.M."/>
            <person name="Rubin G.M."/>
            <person name="Lewis S.E."/>
        </authorList>
    </citation>
    <scope>GENOME REANNOTATION</scope>
    <source>
        <strain>Berkeley</strain>
    </source>
</reference>
<reference key="4">
    <citation type="journal article" date="2002" name="Genome Biol.">
        <title>A Drosophila full-length cDNA resource.</title>
        <authorList>
            <person name="Stapleton M."/>
            <person name="Carlson J.W."/>
            <person name="Brokstein P."/>
            <person name="Yu C."/>
            <person name="Champe M."/>
            <person name="George R.A."/>
            <person name="Guarin H."/>
            <person name="Kronmiller B."/>
            <person name="Pacleb J.M."/>
            <person name="Park S."/>
            <person name="Wan K.H."/>
            <person name="Rubin G.M."/>
            <person name="Celniker S.E."/>
        </authorList>
    </citation>
    <scope>NUCLEOTIDE SEQUENCE [LARGE SCALE MRNA] OF 400-1831</scope>
    <source>
        <strain>Berkeley</strain>
        <tissue>Embryo</tissue>
    </source>
</reference>
<reference key="5">
    <citation type="journal article" date="2000" name="Genes Dev.">
        <title>Spt5 and spt6 are associated with active transcription and have characteristics of general elongation factors in D. melanogaster.</title>
        <authorList>
            <person name="Kaplan C.D."/>
            <person name="Morris J.R."/>
            <person name="Wu C.-T."/>
            <person name="Winston F."/>
        </authorList>
    </citation>
    <scope>SUBCELLULAR LOCATION</scope>
</reference>
<reference key="6">
    <citation type="journal article" date="2000" name="Genes Dev.">
        <title>High-resolution localization of Drosophila Spt5 and Spt6 at heat shock genes in vivo: roles in promoter proximal pausing and transcription elongation.</title>
        <authorList>
            <person name="Andrulis E.D."/>
            <person name="Guzman E."/>
            <person name="Doering P."/>
            <person name="Werner J."/>
            <person name="Lis J.T."/>
        </authorList>
    </citation>
    <scope>SUBCELLULAR LOCATION</scope>
</reference>
<reference key="7">
    <citation type="journal article" date="2002" name="Nature">
        <title>The RNA processing exosome is linked to elongating RNA polymerase II in Drosophila.</title>
        <authorList>
            <person name="Andrulis E.D."/>
            <person name="Werner J."/>
            <person name="Nazarian A."/>
            <person name="Erdjument-Bromage H."/>
            <person name="Tempst P."/>
            <person name="Lis J.T."/>
        </authorList>
    </citation>
    <scope>SELF-ASSOCIATION</scope>
    <scope>INTERACTION WITH SPT5 AND THE EXOSOME COMPLEX</scope>
    <scope>SUBCELLULAR LOCATION</scope>
</reference>
<reference key="8">
    <citation type="journal article" date="2003" name="Science">
        <title>Tracking FACT and the RNA polymerase II elongation complex through chromatin in vivo.</title>
        <authorList>
            <person name="Saunders A."/>
            <person name="Werner J."/>
            <person name="Andrulis E.D."/>
            <person name="Nakayama T."/>
            <person name="Hirose S."/>
            <person name="Reinberg D."/>
            <person name="Lis J.T."/>
        </authorList>
    </citation>
    <scope>INTERACTION WITH SPT5; RNA POLYMERASE II AND THE FACT COMPLEX</scope>
    <scope>SUBCELLULAR LOCATION</scope>
</reference>
<reference key="9">
    <citation type="journal article" date="2007" name="Mol. Biosyst.">
        <title>An integrated chemical, mass spectrometric and computational strategy for (quantitative) phosphoproteomics: application to Drosophila melanogaster Kc167 cells.</title>
        <authorList>
            <person name="Bodenmiller B."/>
            <person name="Mueller L.N."/>
            <person name="Pedrioli P.G.A."/>
            <person name="Pflieger D."/>
            <person name="Juenger M.A."/>
            <person name="Eng J.K."/>
            <person name="Aebersold R."/>
            <person name="Tao W.A."/>
        </authorList>
    </citation>
    <scope>PHOSPHORYLATION [LARGE SCALE ANALYSIS] AT SER-124</scope>
    <scope>IDENTIFICATION BY MASS SPECTROMETRY</scope>
</reference>
<reference key="10">
    <citation type="journal article" date="2008" name="J. Proteome Res.">
        <title>Phosphoproteome analysis of Drosophila melanogaster embryos.</title>
        <authorList>
            <person name="Zhai B."/>
            <person name="Villen J."/>
            <person name="Beausoleil S.A."/>
            <person name="Mintseris J."/>
            <person name="Gygi S.P."/>
        </authorList>
    </citation>
    <scope>PHOSPHORYLATION [LARGE SCALE ANALYSIS] AT SER-34; SER-36; SER-37; SER-66; SER-70; SER-75; SER-151; SER-156; SER-159; THR-171; SER-173; SER-1661; SER-1664 AND SER-1815</scope>
    <scope>IDENTIFICATION BY MASS SPECTROMETRY</scope>
    <source>
        <tissue>Embryo</tissue>
    </source>
</reference>
<reference key="11">
    <citation type="journal article" date="2009" name="EMBO J.">
        <title>Spt6 enhances the elongation rate of RNA polymerase II in vivo.</title>
        <authorList>
            <person name="Ardehali M.B."/>
            <person name="Yao J."/>
            <person name="Adelman K."/>
            <person name="Fuda N.J."/>
            <person name="Petesch S.J."/>
            <person name="Webb W.W."/>
            <person name="Lis J.T."/>
        </authorList>
    </citation>
    <scope>FUNCTION</scope>
</reference>
<feature type="chain" id="PRO_0000072170" description="Transcription elongation factor SPT6">
    <location>
        <begin position="1"/>
        <end position="1831"/>
    </location>
</feature>
<feature type="domain" description="S1 motif" evidence="2">
    <location>
        <begin position="1217"/>
        <end position="1286"/>
    </location>
</feature>
<feature type="domain" description="SH2">
    <location>
        <begin position="1329"/>
        <end position="1440"/>
    </location>
</feature>
<feature type="region of interest" description="Disordered" evidence="3">
    <location>
        <begin position="1"/>
        <end position="99"/>
    </location>
</feature>
<feature type="region of interest" description="Disordered" evidence="3">
    <location>
        <begin position="117"/>
        <end position="199"/>
    </location>
</feature>
<feature type="region of interest" description="Disordered" evidence="3">
    <location>
        <begin position="221"/>
        <end position="240"/>
    </location>
</feature>
<feature type="region of interest" description="Disordered" evidence="3">
    <location>
        <begin position="470"/>
        <end position="501"/>
    </location>
</feature>
<feature type="region of interest" description="Disordered" evidence="3">
    <location>
        <begin position="1531"/>
        <end position="1587"/>
    </location>
</feature>
<feature type="region of interest" description="Disordered" evidence="3">
    <location>
        <begin position="1602"/>
        <end position="1716"/>
    </location>
</feature>
<feature type="region of interest" description="Disordered" evidence="3">
    <location>
        <begin position="1730"/>
        <end position="1831"/>
    </location>
</feature>
<feature type="coiled-coil region" evidence="1">
    <location>
        <begin position="7"/>
        <end position="59"/>
    </location>
</feature>
<feature type="coiled-coil region" evidence="1">
    <location>
        <begin position="467"/>
        <end position="494"/>
    </location>
</feature>
<feature type="compositionally biased region" description="Acidic residues" evidence="3">
    <location>
        <begin position="1"/>
        <end position="19"/>
    </location>
</feature>
<feature type="compositionally biased region" description="Basic and acidic residues" evidence="3">
    <location>
        <begin position="45"/>
        <end position="55"/>
    </location>
</feature>
<feature type="compositionally biased region" description="Acidic residues" evidence="3">
    <location>
        <begin position="56"/>
        <end position="66"/>
    </location>
</feature>
<feature type="compositionally biased region" description="Acidic residues" evidence="3">
    <location>
        <begin position="85"/>
        <end position="99"/>
    </location>
</feature>
<feature type="compositionally biased region" description="Basic and acidic residues" evidence="3">
    <location>
        <begin position="119"/>
        <end position="140"/>
    </location>
</feature>
<feature type="compositionally biased region" description="Basic and acidic residues" evidence="3">
    <location>
        <begin position="151"/>
        <end position="163"/>
    </location>
</feature>
<feature type="compositionally biased region" description="Acidic residues" evidence="3">
    <location>
        <begin position="164"/>
        <end position="180"/>
    </location>
</feature>
<feature type="compositionally biased region" description="Acidic residues" evidence="3">
    <location>
        <begin position="223"/>
        <end position="240"/>
    </location>
</feature>
<feature type="compositionally biased region" description="Basic and acidic residues" evidence="3">
    <location>
        <begin position="470"/>
        <end position="482"/>
    </location>
</feature>
<feature type="compositionally biased region" description="Low complexity" evidence="3">
    <location>
        <begin position="1531"/>
        <end position="1542"/>
    </location>
</feature>
<feature type="compositionally biased region" description="Polar residues" evidence="3">
    <location>
        <begin position="1565"/>
        <end position="1575"/>
    </location>
</feature>
<feature type="compositionally biased region" description="Low complexity" evidence="3">
    <location>
        <begin position="1602"/>
        <end position="1627"/>
    </location>
</feature>
<feature type="compositionally biased region" description="Polar residues" evidence="3">
    <location>
        <begin position="1631"/>
        <end position="1641"/>
    </location>
</feature>
<feature type="compositionally biased region" description="Low complexity" evidence="3">
    <location>
        <begin position="1660"/>
        <end position="1683"/>
    </location>
</feature>
<feature type="compositionally biased region" description="Gly residues" evidence="3">
    <location>
        <begin position="1689"/>
        <end position="1703"/>
    </location>
</feature>
<feature type="compositionally biased region" description="Low complexity" evidence="3">
    <location>
        <begin position="1736"/>
        <end position="1746"/>
    </location>
</feature>
<feature type="compositionally biased region" description="Gly residues" evidence="3">
    <location>
        <begin position="1772"/>
        <end position="1783"/>
    </location>
</feature>
<feature type="compositionally biased region" description="Polar residues" evidence="3">
    <location>
        <begin position="1799"/>
        <end position="1818"/>
    </location>
</feature>
<feature type="modified residue" description="Phosphoserine" evidence="9">
    <location>
        <position position="34"/>
    </location>
</feature>
<feature type="modified residue" description="Phosphoserine" evidence="9">
    <location>
        <position position="36"/>
    </location>
</feature>
<feature type="modified residue" description="Phosphoserine" evidence="9">
    <location>
        <position position="37"/>
    </location>
</feature>
<feature type="modified residue" description="Phosphoserine" evidence="9">
    <location>
        <position position="66"/>
    </location>
</feature>
<feature type="modified residue" description="Phosphoserine" evidence="9">
    <location>
        <position position="70"/>
    </location>
</feature>
<feature type="modified residue" description="Phosphoserine" evidence="9">
    <location>
        <position position="75"/>
    </location>
</feature>
<feature type="modified residue" description="Phosphoserine" evidence="8">
    <location>
        <position position="124"/>
    </location>
</feature>
<feature type="modified residue" description="Phosphoserine" evidence="9">
    <location>
        <position position="151"/>
    </location>
</feature>
<feature type="modified residue" description="Phosphoserine" evidence="9">
    <location>
        <position position="156"/>
    </location>
</feature>
<feature type="modified residue" description="Phosphoserine" evidence="9">
    <location>
        <position position="159"/>
    </location>
</feature>
<feature type="modified residue" description="Phosphothreonine" evidence="9">
    <location>
        <position position="171"/>
    </location>
</feature>
<feature type="modified residue" description="Phosphoserine" evidence="9">
    <location>
        <position position="173"/>
    </location>
</feature>
<feature type="modified residue" description="Phosphoserine" evidence="9">
    <location>
        <position position="1661"/>
    </location>
</feature>
<feature type="modified residue" description="Phosphoserine" evidence="9">
    <location>
        <position position="1664"/>
    </location>
</feature>
<feature type="modified residue" description="Phosphoserine" evidence="9">
    <location>
        <position position="1815"/>
    </location>
</feature>
<feature type="sequence conflict" description="In Ref. 1; AAF14114/AAF14115." evidence="11" ref="1">
    <original>L</original>
    <variation>I</variation>
    <location>
        <position position="1194"/>
    </location>
</feature>
<comment type="function">
    <text evidence="10">Histone H3-H4 chaperone that plays a role in maintenance of chromatin structure during RNA polymerase II transcription elongation. Required for the transcriptional induction of heat shock response genes and for maximal recruitment of two other elongation factors, Spt5 and Paf1, to the induced Hsp70. Plays a critical role in normal fly development throughout the lifecycle.</text>
</comment>
<comment type="subunit">
    <text evidence="6 7">Self associates. Interacts with RNA polymerase II. Interacts with the FACT complex, which is composed of dre4/Spt16 and Ssrp/Ssrp1. Interacts with the exosome, a complex with 3'-5' exoribonuclease activity which is composed of at least Csl4, Dis3, Mtr3, Rrp4, Rrp6, Rrp40, Rrp42, Rrp46 and Ski6. Interacts with the DRB sensitivity-inducing factor complex (the DSIF complex), which is composed of Spt4 and Spt5.</text>
</comment>
<comment type="subcellular location">
    <subcellularLocation>
        <location evidence="4 5 6 7">Nucleus</location>
    </subcellularLocation>
    <text>Recruited to sites of active transcription where it colocalizes with the elongating form of RNA polymerase II.</text>
</comment>
<comment type="similarity">
    <text evidence="11">Belongs to the SPT6 family.</text>
</comment>
<comment type="sequence caution" evidence="11">
    <conflict type="erroneous gene model prediction">
        <sequence resource="EMBL-CDS" id="AAF14115"/>
    </conflict>
</comment>
<comment type="sequence caution" evidence="11">
    <conflict type="erroneous initiation">
        <sequence resource="EMBL-CDS" id="AAK93454"/>
    </conflict>
    <text>Truncated N-terminus.</text>
</comment>
<evidence type="ECO:0000255" key="1"/>
<evidence type="ECO:0000255" key="2">
    <source>
        <dbReference type="PROSITE-ProRule" id="PRU00180"/>
    </source>
</evidence>
<evidence type="ECO:0000256" key="3">
    <source>
        <dbReference type="SAM" id="MobiDB-lite"/>
    </source>
</evidence>
<evidence type="ECO:0000269" key="4">
    <source>
    </source>
</evidence>
<evidence type="ECO:0000269" key="5">
    <source>
    </source>
</evidence>
<evidence type="ECO:0000269" key="6">
    <source>
    </source>
</evidence>
<evidence type="ECO:0000269" key="7">
    <source>
    </source>
</evidence>
<evidence type="ECO:0000269" key="8">
    <source>
    </source>
</evidence>
<evidence type="ECO:0000269" key="9">
    <source>
    </source>
</evidence>
<evidence type="ECO:0000269" key="10">
    <source>
    </source>
</evidence>
<evidence type="ECO:0000305" key="11"/>
<accession>Q9W420</accession>
<accession>Q960J2</accession>
<accession>Q9U8B5</accession>
<accession>Q9U8B6</accession>
<dbReference type="EMBL" id="AF104400">
    <property type="protein sequence ID" value="AAF14114.1"/>
    <property type="molecule type" value="mRNA"/>
</dbReference>
<dbReference type="EMBL" id="AF104401">
    <property type="protein sequence ID" value="AAF14115.1"/>
    <property type="status" value="ALT_SEQ"/>
    <property type="molecule type" value="Genomic_DNA"/>
</dbReference>
<dbReference type="EMBL" id="AE014298">
    <property type="protein sequence ID" value="AAF46140.1"/>
    <property type="molecule type" value="Genomic_DNA"/>
</dbReference>
<dbReference type="EMBL" id="AY052030">
    <property type="protein sequence ID" value="AAK93454.1"/>
    <property type="status" value="ALT_INIT"/>
    <property type="molecule type" value="mRNA"/>
</dbReference>
<dbReference type="RefSeq" id="NP_001284936.1">
    <property type="nucleotide sequence ID" value="NM_001298007.1"/>
</dbReference>
<dbReference type="RefSeq" id="NP_651962.2">
    <property type="nucleotide sequence ID" value="NM_143705.3"/>
</dbReference>
<dbReference type="SMR" id="Q9W420"/>
<dbReference type="BioGRID" id="68765">
    <property type="interactions" value="21"/>
</dbReference>
<dbReference type="FunCoup" id="Q9W420">
    <property type="interactions" value="2815"/>
</dbReference>
<dbReference type="IntAct" id="Q9W420">
    <property type="interactions" value="14"/>
</dbReference>
<dbReference type="STRING" id="7227.FBpp0070861"/>
<dbReference type="GlyGen" id="Q9W420">
    <property type="glycosylation" value="1 site"/>
</dbReference>
<dbReference type="iPTMnet" id="Q9W420"/>
<dbReference type="PaxDb" id="7227-FBpp0070861"/>
<dbReference type="DNASU" id="44000"/>
<dbReference type="EnsemblMetazoa" id="FBtr0070896">
    <property type="protein sequence ID" value="FBpp0070861"/>
    <property type="gene ID" value="FBgn0028982"/>
</dbReference>
<dbReference type="EnsemblMetazoa" id="FBtr0340027">
    <property type="protein sequence ID" value="FBpp0309041"/>
    <property type="gene ID" value="FBgn0028982"/>
</dbReference>
<dbReference type="GeneID" id="44000"/>
<dbReference type="KEGG" id="dme:Dmel_CG12225"/>
<dbReference type="AGR" id="FB:FBgn0028982"/>
<dbReference type="CTD" id="44000"/>
<dbReference type="FlyBase" id="FBgn0028982">
    <property type="gene designation" value="Spt6"/>
</dbReference>
<dbReference type="VEuPathDB" id="VectorBase:FBgn0028982"/>
<dbReference type="eggNOG" id="KOG1856">
    <property type="taxonomic scope" value="Eukaryota"/>
</dbReference>
<dbReference type="GeneTree" id="ENSGT00510000047446"/>
<dbReference type="HOGENOM" id="CLU_001680_4_0_1"/>
<dbReference type="InParanoid" id="Q9W420"/>
<dbReference type="OMA" id="GYFYLCF"/>
<dbReference type="OrthoDB" id="343921at2759"/>
<dbReference type="PhylomeDB" id="Q9W420"/>
<dbReference type="Reactome" id="R-DME-112382">
    <property type="pathway name" value="Formation of RNA Pol II elongation complex"/>
</dbReference>
<dbReference type="Reactome" id="R-DME-674695">
    <property type="pathway name" value="RNA Polymerase II Pre-transcription Events"/>
</dbReference>
<dbReference type="Reactome" id="R-DME-75955">
    <property type="pathway name" value="RNA Polymerase II Transcription Elongation"/>
</dbReference>
<dbReference type="SignaLink" id="Q9W420"/>
<dbReference type="BioGRID-ORCS" id="44000">
    <property type="hits" value="1 hit in 1 CRISPR screen"/>
</dbReference>
<dbReference type="GenomeRNAi" id="44000"/>
<dbReference type="PRO" id="PR:Q9W420"/>
<dbReference type="Proteomes" id="UP000000803">
    <property type="component" value="Chromosome X"/>
</dbReference>
<dbReference type="Bgee" id="FBgn0028982">
    <property type="expression patterns" value="Expressed in cleaving embryo and 206 other cell types or tissues"/>
</dbReference>
<dbReference type="ExpressionAtlas" id="Q9W420">
    <property type="expression patterns" value="baseline and differential"/>
</dbReference>
<dbReference type="GO" id="GO:0000775">
    <property type="term" value="C:chromosome, centromeric region"/>
    <property type="evidence" value="ECO:0000314"/>
    <property type="project" value="FlyBase"/>
</dbReference>
<dbReference type="GO" id="GO:0000791">
    <property type="term" value="C:euchromatin"/>
    <property type="evidence" value="ECO:0000314"/>
    <property type="project" value="FlyBase"/>
</dbReference>
<dbReference type="GO" id="GO:0035363">
    <property type="term" value="C:histone locus body"/>
    <property type="evidence" value="ECO:0000314"/>
    <property type="project" value="FlyBase"/>
</dbReference>
<dbReference type="GO" id="GO:0005634">
    <property type="term" value="C:nucleus"/>
    <property type="evidence" value="ECO:0000314"/>
    <property type="project" value="FlyBase"/>
</dbReference>
<dbReference type="GO" id="GO:0005705">
    <property type="term" value="C:polytene chromosome interband"/>
    <property type="evidence" value="ECO:0000314"/>
    <property type="project" value="UniProtKB"/>
</dbReference>
<dbReference type="GO" id="GO:0005703">
    <property type="term" value="C:polytene chromosome puff"/>
    <property type="evidence" value="ECO:0000314"/>
    <property type="project" value="UniProtKB"/>
</dbReference>
<dbReference type="GO" id="GO:0008023">
    <property type="term" value="C:transcription elongation factor complex"/>
    <property type="evidence" value="ECO:0000353"/>
    <property type="project" value="UniProtKB"/>
</dbReference>
<dbReference type="GO" id="GO:0003682">
    <property type="term" value="F:chromatin binding"/>
    <property type="evidence" value="ECO:0000314"/>
    <property type="project" value="FlyBase"/>
</dbReference>
<dbReference type="GO" id="GO:0003677">
    <property type="term" value="F:DNA binding"/>
    <property type="evidence" value="ECO:0007669"/>
    <property type="project" value="InterPro"/>
</dbReference>
<dbReference type="GO" id="GO:0042393">
    <property type="term" value="F:histone binding"/>
    <property type="evidence" value="ECO:0000318"/>
    <property type="project" value="GO_Central"/>
</dbReference>
<dbReference type="GO" id="GO:0031491">
    <property type="term" value="F:nucleosome binding"/>
    <property type="evidence" value="ECO:0000318"/>
    <property type="project" value="GO_Central"/>
</dbReference>
<dbReference type="GO" id="GO:0000993">
    <property type="term" value="F:RNA polymerase II complex binding"/>
    <property type="evidence" value="ECO:0000314"/>
    <property type="project" value="UniProtKB"/>
</dbReference>
<dbReference type="GO" id="GO:0030707">
    <property type="term" value="P:follicle cell of egg chamber development"/>
    <property type="evidence" value="ECO:0000315"/>
    <property type="project" value="FlyBase"/>
</dbReference>
<dbReference type="GO" id="GO:0034728">
    <property type="term" value="P:nucleosome organization"/>
    <property type="evidence" value="ECO:0000318"/>
    <property type="project" value="GO_Central"/>
</dbReference>
<dbReference type="GO" id="GO:0006963">
    <property type="term" value="P:positive regulation of antibacterial peptide biosynthetic process"/>
    <property type="evidence" value="ECO:0000315"/>
    <property type="project" value="FlyBase"/>
</dbReference>
<dbReference type="GO" id="GO:0006368">
    <property type="term" value="P:transcription elongation by RNA polymerase II"/>
    <property type="evidence" value="ECO:0000315"/>
    <property type="project" value="FlyBase"/>
</dbReference>
<dbReference type="GO" id="GO:0140673">
    <property type="term" value="P:transcription elongation-coupled chromatin remodeling"/>
    <property type="evidence" value="ECO:0007669"/>
    <property type="project" value="InterPro"/>
</dbReference>
<dbReference type="CDD" id="cd00164">
    <property type="entry name" value="S1_like"/>
    <property type="match status" value="1"/>
</dbReference>
<dbReference type="CDD" id="cd09928">
    <property type="entry name" value="SH2_Cterm_SPT6_like"/>
    <property type="match status" value="1"/>
</dbReference>
<dbReference type="CDD" id="cd09918">
    <property type="entry name" value="SH2_Nterm_SPT6_like"/>
    <property type="match status" value="1"/>
</dbReference>
<dbReference type="FunFam" id="1.10.150.850:FF:000004">
    <property type="entry name" value="Transcription elongation factor SPT6"/>
    <property type="match status" value="1"/>
</dbReference>
<dbReference type="FunFam" id="1.10.10.2740:FF:000001">
    <property type="entry name" value="Transcription elongation factor spt6"/>
    <property type="match status" value="1"/>
</dbReference>
<dbReference type="FunFam" id="1.10.10.650:FF:000002">
    <property type="entry name" value="Transcription elongation factor spt6"/>
    <property type="match status" value="1"/>
</dbReference>
<dbReference type="FunFam" id="1.10.150.850:FF:000003">
    <property type="entry name" value="Transcription elongation factor spt6"/>
    <property type="match status" value="1"/>
</dbReference>
<dbReference type="FunFam" id="1.10.3500.10:FF:000006">
    <property type="entry name" value="Transcription elongation factor spt6"/>
    <property type="match status" value="1"/>
</dbReference>
<dbReference type="FunFam" id="3.30.420.140:FF:000004">
    <property type="entry name" value="Transcription elongation factor spt6"/>
    <property type="match status" value="1"/>
</dbReference>
<dbReference type="FunFam" id="3.30.505.10:FF:000030">
    <property type="entry name" value="Transcription elongation factor spt6"/>
    <property type="match status" value="1"/>
</dbReference>
<dbReference type="FunFam" id="3.30.505.10:FF:000089">
    <property type="entry name" value="Transcription elongation factor spt6"/>
    <property type="match status" value="1"/>
</dbReference>
<dbReference type="Gene3D" id="2.40.50.140">
    <property type="entry name" value="Nucleic acid-binding proteins"/>
    <property type="match status" value="1"/>
</dbReference>
<dbReference type="Gene3D" id="1.10.10.650">
    <property type="entry name" value="RuvA domain 2-like"/>
    <property type="match status" value="1"/>
</dbReference>
<dbReference type="Gene3D" id="3.30.505.10">
    <property type="entry name" value="SH2 domain"/>
    <property type="match status" value="2"/>
</dbReference>
<dbReference type="Gene3D" id="1.10.10.2740">
    <property type="entry name" value="Spt6, Death-like domain"/>
    <property type="match status" value="1"/>
</dbReference>
<dbReference type="Gene3D" id="1.10.150.850">
    <property type="entry name" value="Spt6, helix-hairpin-helix domain"/>
    <property type="match status" value="2"/>
</dbReference>
<dbReference type="Gene3D" id="1.10.3500.10">
    <property type="entry name" value="Tex N-terminal region-like"/>
    <property type="match status" value="1"/>
</dbReference>
<dbReference type="Gene3D" id="3.30.420.140">
    <property type="entry name" value="YqgF/RNase H-like domain"/>
    <property type="match status" value="1"/>
</dbReference>
<dbReference type="InterPro" id="IPR041692">
    <property type="entry name" value="HHH_9"/>
</dbReference>
<dbReference type="InterPro" id="IPR012340">
    <property type="entry name" value="NA-bd_OB-fold"/>
</dbReference>
<dbReference type="InterPro" id="IPR012337">
    <property type="entry name" value="RNaseH-like_sf"/>
</dbReference>
<dbReference type="InterPro" id="IPR010994">
    <property type="entry name" value="RuvA_2-like"/>
</dbReference>
<dbReference type="InterPro" id="IPR003029">
    <property type="entry name" value="S1_domain"/>
</dbReference>
<dbReference type="InterPro" id="IPR036860">
    <property type="entry name" value="SH2_dom_sf"/>
</dbReference>
<dbReference type="InterPro" id="IPR028083">
    <property type="entry name" value="Spt6_acidic_N_dom"/>
</dbReference>
<dbReference type="InterPro" id="IPR042066">
    <property type="entry name" value="Spt6_death-like"/>
</dbReference>
<dbReference type="InterPro" id="IPR032706">
    <property type="entry name" value="Spt6_HHH"/>
</dbReference>
<dbReference type="InterPro" id="IPR028088">
    <property type="entry name" value="Spt6_HTH_DNA-bd_dom"/>
</dbReference>
<dbReference type="InterPro" id="IPR035420">
    <property type="entry name" value="Spt6_SH2"/>
</dbReference>
<dbReference type="InterPro" id="IPR035018">
    <property type="entry name" value="Spt6_SH2_C"/>
</dbReference>
<dbReference type="InterPro" id="IPR035019">
    <property type="entry name" value="Spt6_SH2_N"/>
</dbReference>
<dbReference type="InterPro" id="IPR028231">
    <property type="entry name" value="Spt6_YqgF"/>
</dbReference>
<dbReference type="InterPro" id="IPR055179">
    <property type="entry name" value="Tex-like_central_region"/>
</dbReference>
<dbReference type="InterPro" id="IPR023323">
    <property type="entry name" value="Tex-like_dom_sf"/>
</dbReference>
<dbReference type="InterPro" id="IPR023319">
    <property type="entry name" value="Tex-like_HTH_dom_sf"/>
</dbReference>
<dbReference type="InterPro" id="IPR017072">
    <property type="entry name" value="TF_Spt6"/>
</dbReference>
<dbReference type="InterPro" id="IPR006641">
    <property type="entry name" value="YqgF/RNaseH-like_dom"/>
</dbReference>
<dbReference type="InterPro" id="IPR037027">
    <property type="entry name" value="YqgF/RNaseH-like_dom_sf"/>
</dbReference>
<dbReference type="PANTHER" id="PTHR10145">
    <property type="entry name" value="TRANSCRIPTION ELONGATION FACTOR SPT6"/>
    <property type="match status" value="1"/>
</dbReference>
<dbReference type="PANTHER" id="PTHR10145:SF6">
    <property type="entry name" value="TRANSCRIPTION ELONGATION FACTOR SPT6"/>
    <property type="match status" value="1"/>
</dbReference>
<dbReference type="Pfam" id="PF14635">
    <property type="entry name" value="HHH_7"/>
    <property type="match status" value="1"/>
</dbReference>
<dbReference type="Pfam" id="PF17674">
    <property type="entry name" value="HHH_9"/>
    <property type="match status" value="1"/>
</dbReference>
<dbReference type="Pfam" id="PF14641">
    <property type="entry name" value="HTH_44"/>
    <property type="match status" value="1"/>
</dbReference>
<dbReference type="Pfam" id="PF00575">
    <property type="entry name" value="S1"/>
    <property type="match status" value="1"/>
</dbReference>
<dbReference type="Pfam" id="PF14633">
    <property type="entry name" value="SH2_2"/>
    <property type="match status" value="1"/>
</dbReference>
<dbReference type="Pfam" id="PF14632">
    <property type="entry name" value="SPT6_acidic"/>
    <property type="match status" value="1"/>
</dbReference>
<dbReference type="Pfam" id="PF22706">
    <property type="entry name" value="Tex_central_region"/>
    <property type="match status" value="1"/>
</dbReference>
<dbReference type="Pfam" id="PF14639">
    <property type="entry name" value="YqgF"/>
    <property type="match status" value="1"/>
</dbReference>
<dbReference type="PIRSF" id="PIRSF036947">
    <property type="entry name" value="Spt6"/>
    <property type="match status" value="1"/>
</dbReference>
<dbReference type="SMART" id="SM00316">
    <property type="entry name" value="S1"/>
    <property type="match status" value="1"/>
</dbReference>
<dbReference type="SMART" id="SM00732">
    <property type="entry name" value="YqgFc"/>
    <property type="match status" value="1"/>
</dbReference>
<dbReference type="SUPFAM" id="SSF50249">
    <property type="entry name" value="Nucleic acid-binding proteins"/>
    <property type="match status" value="1"/>
</dbReference>
<dbReference type="SUPFAM" id="SSF53098">
    <property type="entry name" value="Ribonuclease H-like"/>
    <property type="match status" value="1"/>
</dbReference>
<dbReference type="SUPFAM" id="SSF47781">
    <property type="entry name" value="RuvA domain 2-like"/>
    <property type="match status" value="2"/>
</dbReference>
<dbReference type="SUPFAM" id="SSF55550">
    <property type="entry name" value="SH2 domain"/>
    <property type="match status" value="2"/>
</dbReference>
<dbReference type="SUPFAM" id="SSF158832">
    <property type="entry name" value="Tex N-terminal region-like"/>
    <property type="match status" value="1"/>
</dbReference>
<dbReference type="PROSITE" id="PS50126">
    <property type="entry name" value="S1"/>
    <property type="match status" value="1"/>
</dbReference>